<dbReference type="EC" id="2.5.1.19" evidence="1"/>
<dbReference type="EMBL" id="CP000605">
    <property type="protein sequence ID" value="ACD98169.1"/>
    <property type="molecule type" value="Genomic_DNA"/>
</dbReference>
<dbReference type="RefSeq" id="WP_012471929.1">
    <property type="nucleotide sequence ID" value="NC_010816.1"/>
</dbReference>
<dbReference type="SMR" id="B3DSQ0"/>
<dbReference type="KEGG" id="blj:BLD_0723"/>
<dbReference type="HOGENOM" id="CLU_024321_0_0_11"/>
<dbReference type="UniPathway" id="UPA00053">
    <property type="reaction ID" value="UER00089"/>
</dbReference>
<dbReference type="Proteomes" id="UP000002419">
    <property type="component" value="Chromosome"/>
</dbReference>
<dbReference type="GO" id="GO:0005737">
    <property type="term" value="C:cytoplasm"/>
    <property type="evidence" value="ECO:0007669"/>
    <property type="project" value="UniProtKB-SubCell"/>
</dbReference>
<dbReference type="GO" id="GO:0003866">
    <property type="term" value="F:3-phosphoshikimate 1-carboxyvinyltransferase activity"/>
    <property type="evidence" value="ECO:0007669"/>
    <property type="project" value="UniProtKB-UniRule"/>
</dbReference>
<dbReference type="GO" id="GO:0008652">
    <property type="term" value="P:amino acid biosynthetic process"/>
    <property type="evidence" value="ECO:0007669"/>
    <property type="project" value="UniProtKB-KW"/>
</dbReference>
<dbReference type="GO" id="GO:0009073">
    <property type="term" value="P:aromatic amino acid family biosynthetic process"/>
    <property type="evidence" value="ECO:0007669"/>
    <property type="project" value="UniProtKB-KW"/>
</dbReference>
<dbReference type="GO" id="GO:0009423">
    <property type="term" value="P:chorismate biosynthetic process"/>
    <property type="evidence" value="ECO:0007669"/>
    <property type="project" value="UniProtKB-UniRule"/>
</dbReference>
<dbReference type="CDD" id="cd01556">
    <property type="entry name" value="EPSP_synthase"/>
    <property type="match status" value="1"/>
</dbReference>
<dbReference type="Gene3D" id="3.65.10.10">
    <property type="entry name" value="Enolpyruvate transferase domain"/>
    <property type="match status" value="2"/>
</dbReference>
<dbReference type="HAMAP" id="MF_00210">
    <property type="entry name" value="EPSP_synth"/>
    <property type="match status" value="1"/>
</dbReference>
<dbReference type="InterPro" id="IPR001986">
    <property type="entry name" value="Enolpyruvate_Tfrase_dom"/>
</dbReference>
<dbReference type="InterPro" id="IPR036968">
    <property type="entry name" value="Enolpyruvate_Tfrase_sf"/>
</dbReference>
<dbReference type="InterPro" id="IPR006264">
    <property type="entry name" value="EPSP_synthase"/>
</dbReference>
<dbReference type="InterPro" id="IPR023193">
    <property type="entry name" value="EPSP_synthase_CS"/>
</dbReference>
<dbReference type="InterPro" id="IPR013792">
    <property type="entry name" value="RNA3'P_cycl/enolpyr_Trfase_a/b"/>
</dbReference>
<dbReference type="NCBIfam" id="TIGR01356">
    <property type="entry name" value="aroA"/>
    <property type="match status" value="1"/>
</dbReference>
<dbReference type="PANTHER" id="PTHR21090">
    <property type="entry name" value="AROM/DEHYDROQUINATE SYNTHASE"/>
    <property type="match status" value="1"/>
</dbReference>
<dbReference type="PANTHER" id="PTHR21090:SF5">
    <property type="entry name" value="PENTAFUNCTIONAL AROM POLYPEPTIDE"/>
    <property type="match status" value="1"/>
</dbReference>
<dbReference type="Pfam" id="PF00275">
    <property type="entry name" value="EPSP_synthase"/>
    <property type="match status" value="1"/>
</dbReference>
<dbReference type="PIRSF" id="PIRSF000505">
    <property type="entry name" value="EPSPS"/>
    <property type="match status" value="1"/>
</dbReference>
<dbReference type="SUPFAM" id="SSF55205">
    <property type="entry name" value="EPT/RTPC-like"/>
    <property type="match status" value="1"/>
</dbReference>
<dbReference type="PROSITE" id="PS00104">
    <property type="entry name" value="EPSP_SYNTHASE_1"/>
    <property type="match status" value="1"/>
</dbReference>
<dbReference type="PROSITE" id="PS00885">
    <property type="entry name" value="EPSP_SYNTHASE_2"/>
    <property type="match status" value="1"/>
</dbReference>
<accession>B3DSQ0</accession>
<gene>
    <name evidence="1" type="primary">aroA</name>
    <name type="ordered locus">BLD_0723</name>
</gene>
<sequence length="445" mass="46741">MTERLTNLWPAPLAAQPLNATVTVPGSKSLSNRYLILAALGSKPVTLIGLLRSRDTDLMMGALEALGVRCDVDSATDTTVTVTPPVSGRFHGNVNVFCGLAGTVMRFVPGLALFADGPVNFDGDEQAYARPMKPVLDGLEQLGATVDYHGEVGRLPFTITPPATLPAAQAQVSIDSSGSSQFISGLLLISSKLPGGLHLAHTGEKTPSLPHIRMTVADVTGAGGAVEADESARTWTVEPRAMQLSSKVTVEPDLSNAAPFLGAALIAGGTVRVPHWPETTTQPGGLLPGYLEQMGAEVSFPTIGGVRYCEVTGDGTVRGLGTFDLTAAGEIAPSLAAILVFADKSTDMVGIGHLRGHETNRLEALVNEIRRVGGAAEELPDGLRIEPVPAETLHGAVMETYADHRMATFAAMLGLRIPDIEVINVATTRKTLPDFVGMWSGMLRQ</sequence>
<name>AROA_BIFLD</name>
<organism>
    <name type="scientific">Bifidobacterium longum (strain DJO10A)</name>
    <dbReference type="NCBI Taxonomy" id="205913"/>
    <lineage>
        <taxon>Bacteria</taxon>
        <taxon>Bacillati</taxon>
        <taxon>Actinomycetota</taxon>
        <taxon>Actinomycetes</taxon>
        <taxon>Bifidobacteriales</taxon>
        <taxon>Bifidobacteriaceae</taxon>
        <taxon>Bifidobacterium</taxon>
    </lineage>
</organism>
<keyword id="KW-0028">Amino-acid biosynthesis</keyword>
<keyword id="KW-0057">Aromatic amino acid biosynthesis</keyword>
<keyword id="KW-0963">Cytoplasm</keyword>
<keyword id="KW-0808">Transferase</keyword>
<evidence type="ECO:0000255" key="1">
    <source>
        <dbReference type="HAMAP-Rule" id="MF_00210"/>
    </source>
</evidence>
<protein>
    <recommendedName>
        <fullName evidence="1">3-phosphoshikimate 1-carboxyvinyltransferase</fullName>
        <ecNumber evidence="1">2.5.1.19</ecNumber>
    </recommendedName>
    <alternativeName>
        <fullName evidence="1">5-enolpyruvylshikimate-3-phosphate synthase</fullName>
        <shortName evidence="1">EPSP synthase</shortName>
        <shortName evidence="1">EPSPS</shortName>
    </alternativeName>
</protein>
<proteinExistence type="inferred from homology"/>
<reference key="1">
    <citation type="journal article" date="2008" name="BMC Genomics">
        <title>Comparative genomic analysis of the gut bacterium Bifidobacterium longum reveals loci susceptible to deletion during pure culture growth.</title>
        <authorList>
            <person name="Lee J.H."/>
            <person name="Karamychev V.N."/>
            <person name="Kozyavkin S.A."/>
            <person name="Mills D."/>
            <person name="Pavlov A.R."/>
            <person name="Pavlova N.V."/>
            <person name="Polouchine N.N."/>
            <person name="Richardson P.M."/>
            <person name="Shakhova V.V."/>
            <person name="Slesarev A.I."/>
            <person name="Weimer B."/>
            <person name="O'Sullivan D.J."/>
        </authorList>
    </citation>
    <scope>NUCLEOTIDE SEQUENCE [LARGE SCALE GENOMIC DNA]</scope>
    <source>
        <strain>DJO10A</strain>
    </source>
</reference>
<comment type="function">
    <text evidence="1">Catalyzes the transfer of the enolpyruvyl moiety of phosphoenolpyruvate (PEP) to the 5-hydroxyl of shikimate-3-phosphate (S3P) to produce enolpyruvyl shikimate-3-phosphate and inorganic phosphate.</text>
</comment>
<comment type="catalytic activity">
    <reaction evidence="1">
        <text>3-phosphoshikimate + phosphoenolpyruvate = 5-O-(1-carboxyvinyl)-3-phosphoshikimate + phosphate</text>
        <dbReference type="Rhea" id="RHEA:21256"/>
        <dbReference type="ChEBI" id="CHEBI:43474"/>
        <dbReference type="ChEBI" id="CHEBI:57701"/>
        <dbReference type="ChEBI" id="CHEBI:58702"/>
        <dbReference type="ChEBI" id="CHEBI:145989"/>
        <dbReference type="EC" id="2.5.1.19"/>
    </reaction>
    <physiologicalReaction direction="left-to-right" evidence="1">
        <dbReference type="Rhea" id="RHEA:21257"/>
    </physiologicalReaction>
</comment>
<comment type="pathway">
    <text evidence="1">Metabolic intermediate biosynthesis; chorismate biosynthesis; chorismate from D-erythrose 4-phosphate and phosphoenolpyruvate: step 6/7.</text>
</comment>
<comment type="subunit">
    <text evidence="1">Monomer.</text>
</comment>
<comment type="subcellular location">
    <subcellularLocation>
        <location evidence="1">Cytoplasm</location>
    </subcellularLocation>
</comment>
<comment type="similarity">
    <text evidence="1">Belongs to the EPSP synthase family.</text>
</comment>
<feature type="chain" id="PRO_1000118779" description="3-phosphoshikimate 1-carboxyvinyltransferase">
    <location>
        <begin position="1"/>
        <end position="445"/>
    </location>
</feature>
<feature type="active site" description="Proton acceptor" evidence="1">
    <location>
        <position position="330"/>
    </location>
</feature>
<feature type="binding site" evidence="1">
    <location>
        <position position="28"/>
    </location>
    <ligand>
        <name>3-phosphoshikimate</name>
        <dbReference type="ChEBI" id="CHEBI:145989"/>
    </ligand>
</feature>
<feature type="binding site" evidence="1">
    <location>
        <position position="28"/>
    </location>
    <ligand>
        <name>phosphoenolpyruvate</name>
        <dbReference type="ChEBI" id="CHEBI:58702"/>
    </ligand>
</feature>
<feature type="binding site" evidence="1">
    <location>
        <position position="29"/>
    </location>
    <ligand>
        <name>3-phosphoshikimate</name>
        <dbReference type="ChEBI" id="CHEBI:145989"/>
    </ligand>
</feature>
<feature type="binding site" evidence="1">
    <location>
        <position position="33"/>
    </location>
    <ligand>
        <name>3-phosphoshikimate</name>
        <dbReference type="ChEBI" id="CHEBI:145989"/>
    </ligand>
</feature>
<feature type="binding site" evidence="1">
    <location>
        <position position="102"/>
    </location>
    <ligand>
        <name>phosphoenolpyruvate</name>
        <dbReference type="ChEBI" id="CHEBI:58702"/>
    </ligand>
</feature>
<feature type="binding site" evidence="1">
    <location>
        <position position="130"/>
    </location>
    <ligand>
        <name>phosphoenolpyruvate</name>
        <dbReference type="ChEBI" id="CHEBI:58702"/>
    </ligand>
</feature>
<feature type="binding site" evidence="1">
    <location>
        <position position="179"/>
    </location>
    <ligand>
        <name>3-phosphoshikimate</name>
        <dbReference type="ChEBI" id="CHEBI:145989"/>
    </ligand>
</feature>
<feature type="binding site" evidence="1">
    <location>
        <position position="180"/>
    </location>
    <ligand>
        <name>3-phosphoshikimate</name>
        <dbReference type="ChEBI" id="CHEBI:145989"/>
    </ligand>
</feature>
<feature type="binding site" evidence="1">
    <location>
        <position position="181"/>
    </location>
    <ligand>
        <name>3-phosphoshikimate</name>
        <dbReference type="ChEBI" id="CHEBI:145989"/>
    </ligand>
</feature>
<feature type="binding site" evidence="1">
    <location>
        <position position="181"/>
    </location>
    <ligand>
        <name>phosphoenolpyruvate</name>
        <dbReference type="ChEBI" id="CHEBI:58702"/>
    </ligand>
</feature>
<feature type="binding site" evidence="1">
    <location>
        <position position="330"/>
    </location>
    <ligand>
        <name>3-phosphoshikimate</name>
        <dbReference type="ChEBI" id="CHEBI:145989"/>
    </ligand>
</feature>
<feature type="binding site" evidence="1">
    <location>
        <position position="357"/>
    </location>
    <ligand>
        <name>3-phosphoshikimate</name>
        <dbReference type="ChEBI" id="CHEBI:145989"/>
    </ligand>
</feature>
<feature type="binding site" evidence="1">
    <location>
        <position position="361"/>
    </location>
    <ligand>
        <name>phosphoenolpyruvate</name>
        <dbReference type="ChEBI" id="CHEBI:58702"/>
    </ligand>
</feature>
<feature type="binding site" evidence="1">
    <location>
        <position position="405"/>
    </location>
    <ligand>
        <name>phosphoenolpyruvate</name>
        <dbReference type="ChEBI" id="CHEBI:58702"/>
    </ligand>
</feature>
<feature type="binding site" evidence="1">
    <location>
        <position position="430"/>
    </location>
    <ligand>
        <name>phosphoenolpyruvate</name>
        <dbReference type="ChEBI" id="CHEBI:58702"/>
    </ligand>
</feature>